<sequence length="238" mass="27573">MKLLISNQYGAIVMALVPFIYGMLLANPVWAHIFLLLGWFSLYLMTYPFLNLFKGKNLELYKKWSVIYFAAAVIFAIPALIYNWQVLYFMFAMLPFVAVNIYFTKKKDERNLWNDLAGILIFALAGMGSYYFSDRTFDEKILWVAIYPTLFFIGTTLYVKSMMRERKNPRYFWASVIFHLLCALIFVVSQQFILALAFVPGLVRAVYLPTKKLSVMQVGLIEFAITAVFFILLLVATL</sequence>
<keyword id="KW-1003">Cell membrane</keyword>
<keyword id="KW-0472">Membrane</keyword>
<keyword id="KW-1185">Reference proteome</keyword>
<keyword id="KW-0812">Transmembrane</keyword>
<keyword id="KW-1133">Transmembrane helix</keyword>
<proteinExistence type="predicted"/>
<reference key="1">
    <citation type="journal article" date="1995" name="Science">
        <title>Whole-genome random sequencing and assembly of Haemophilus influenzae Rd.</title>
        <authorList>
            <person name="Fleischmann R.D."/>
            <person name="Adams M.D."/>
            <person name="White O."/>
            <person name="Clayton R.A."/>
            <person name="Kirkness E.F."/>
            <person name="Kerlavage A.R."/>
            <person name="Bult C.J."/>
            <person name="Tomb J.-F."/>
            <person name="Dougherty B.A."/>
            <person name="Merrick J.M."/>
            <person name="McKenney K."/>
            <person name="Sutton G.G."/>
            <person name="FitzHugh W."/>
            <person name="Fields C.A."/>
            <person name="Gocayne J.D."/>
            <person name="Scott J.D."/>
            <person name="Shirley R."/>
            <person name="Liu L.-I."/>
            <person name="Glodek A."/>
            <person name="Kelley J.M."/>
            <person name="Weidman J.F."/>
            <person name="Phillips C.A."/>
            <person name="Spriggs T."/>
            <person name="Hedblom E."/>
            <person name="Cotton M.D."/>
            <person name="Utterback T.R."/>
            <person name="Hanna M.C."/>
            <person name="Nguyen D.T."/>
            <person name="Saudek D.M."/>
            <person name="Brandon R.C."/>
            <person name="Fine L.D."/>
            <person name="Fritchman J.L."/>
            <person name="Fuhrmann J.L."/>
            <person name="Geoghagen N.S.M."/>
            <person name="Gnehm C.L."/>
            <person name="McDonald L.A."/>
            <person name="Small K.V."/>
            <person name="Fraser C.M."/>
            <person name="Smith H.O."/>
            <person name="Venter J.C."/>
        </authorList>
    </citation>
    <scope>NUCLEOTIDE SEQUENCE [LARGE SCALE GENOMIC DNA]</scope>
    <source>
        <strain>ATCC 51907 / DSM 11121 / KW20 / Rd</strain>
    </source>
</reference>
<feature type="chain" id="PRO_0000078102" description="Uncharacterized protein HI_1626">
    <location>
        <begin position="1"/>
        <end position="238"/>
    </location>
</feature>
<feature type="transmembrane region" description="Helical" evidence="1">
    <location>
        <begin position="19"/>
        <end position="39"/>
    </location>
</feature>
<feature type="transmembrane region" description="Helical" evidence="1">
    <location>
        <begin position="64"/>
        <end position="84"/>
    </location>
</feature>
<feature type="transmembrane region" description="Helical" evidence="1">
    <location>
        <begin position="85"/>
        <end position="105"/>
    </location>
</feature>
<feature type="transmembrane region" description="Helical" evidence="1">
    <location>
        <begin position="112"/>
        <end position="132"/>
    </location>
</feature>
<feature type="transmembrane region" description="Helical" evidence="1">
    <location>
        <begin position="141"/>
        <end position="161"/>
    </location>
</feature>
<feature type="transmembrane region" description="Helical" evidence="1">
    <location>
        <begin position="176"/>
        <end position="196"/>
    </location>
</feature>
<feature type="transmembrane region" description="Helical" evidence="1">
    <location>
        <begin position="218"/>
        <end position="238"/>
    </location>
</feature>
<evidence type="ECO:0000255" key="1"/>
<evidence type="ECO:0000305" key="2"/>
<gene>
    <name type="ordered locus">HI_1626</name>
</gene>
<name>Y1626_HAEIN</name>
<comment type="subcellular location">
    <subcellularLocation>
        <location evidence="2">Cell membrane</location>
        <topology evidence="2">Multi-pass membrane protein</topology>
    </subcellularLocation>
</comment>
<comment type="similarity">
    <text evidence="2">To B.subtilis YwiC.</text>
</comment>
<protein>
    <recommendedName>
        <fullName>Uncharacterized protein HI_1626</fullName>
    </recommendedName>
</protein>
<accession>P44278</accession>
<dbReference type="EMBL" id="L42023">
    <property type="protein sequence ID" value="AAC23269.1"/>
    <property type="molecule type" value="Genomic_DNA"/>
</dbReference>
<dbReference type="PIR" id="I64038">
    <property type="entry name" value="I64038"/>
</dbReference>
<dbReference type="RefSeq" id="NP_439768.1">
    <property type="nucleotide sequence ID" value="NC_000907.1"/>
</dbReference>
<dbReference type="STRING" id="71421.HI_1626"/>
<dbReference type="EnsemblBacteria" id="AAC23269">
    <property type="protein sequence ID" value="AAC23269"/>
    <property type="gene ID" value="HI_1626"/>
</dbReference>
<dbReference type="KEGG" id="hin:HI_1626"/>
<dbReference type="PATRIC" id="fig|71421.8.peg.1701"/>
<dbReference type="eggNOG" id="ENOG502ZBRV">
    <property type="taxonomic scope" value="Bacteria"/>
</dbReference>
<dbReference type="HOGENOM" id="CLU_064238_2_0_6"/>
<dbReference type="OrthoDB" id="2380563at2"/>
<dbReference type="BioCyc" id="HINF71421:G1GJ1-1639-MONOMER"/>
<dbReference type="Proteomes" id="UP000000579">
    <property type="component" value="Chromosome"/>
</dbReference>
<dbReference type="GO" id="GO:0005886">
    <property type="term" value="C:plasma membrane"/>
    <property type="evidence" value="ECO:0007669"/>
    <property type="project" value="UniProtKB-SubCell"/>
</dbReference>
<dbReference type="InterPro" id="IPR025576">
    <property type="entry name" value="YwiC"/>
</dbReference>
<dbReference type="Pfam" id="PF14256">
    <property type="entry name" value="YwiC"/>
    <property type="match status" value="1"/>
</dbReference>
<organism>
    <name type="scientific">Haemophilus influenzae (strain ATCC 51907 / DSM 11121 / KW20 / Rd)</name>
    <dbReference type="NCBI Taxonomy" id="71421"/>
    <lineage>
        <taxon>Bacteria</taxon>
        <taxon>Pseudomonadati</taxon>
        <taxon>Pseudomonadota</taxon>
        <taxon>Gammaproteobacteria</taxon>
        <taxon>Pasteurellales</taxon>
        <taxon>Pasteurellaceae</taxon>
        <taxon>Haemophilus</taxon>
    </lineage>
</organism>